<protein>
    <recommendedName>
        <fullName evidence="2 4 5 6">Adenylosuccinate lyase</fullName>
        <shortName evidence="5 6">ADSL</shortName>
        <ecNumber evidence="2 3">4.3.2.2</ecNumber>
    </recommendedName>
    <alternativeName>
        <fullName evidence="2">Adenylosuccinase</fullName>
    </alternativeName>
    <alternativeName>
        <fullName evidence="5">SmADSL</fullName>
    </alternativeName>
</protein>
<proteinExistence type="evidence at protein level"/>
<organism evidence="13 14">
    <name type="scientific">Schistosoma mansoni</name>
    <name type="common">Blood fluke</name>
    <dbReference type="NCBI Taxonomy" id="6183"/>
    <lineage>
        <taxon>Eukaryota</taxon>
        <taxon>Metazoa</taxon>
        <taxon>Spiralia</taxon>
        <taxon>Lophotrochozoa</taxon>
        <taxon>Platyhelminthes</taxon>
        <taxon>Trematoda</taxon>
        <taxon>Digenea</taxon>
        <taxon>Strigeidida</taxon>
        <taxon>Schistosomatoidea</taxon>
        <taxon>Schistosomatidae</taxon>
        <taxon>Schistosoma</taxon>
    </lineage>
</organism>
<comment type="function">
    <text evidence="3">Catalyzes conversion of succinyladenosine monophosphate (SAMP) to AMP and fumarate on the purine salvage pathway.</text>
</comment>
<comment type="catalytic activity">
    <reaction evidence="2 3">
        <text>N(6)-(1,2-dicarboxyethyl)-AMP = fumarate + AMP</text>
        <dbReference type="Rhea" id="RHEA:16853"/>
        <dbReference type="ChEBI" id="CHEBI:29806"/>
        <dbReference type="ChEBI" id="CHEBI:57567"/>
        <dbReference type="ChEBI" id="CHEBI:456215"/>
        <dbReference type="EC" id="4.3.2.2"/>
    </reaction>
    <physiologicalReaction direction="left-to-right" evidence="3">
        <dbReference type="Rhea" id="RHEA:16854"/>
    </physiologicalReaction>
</comment>
<comment type="biophysicochemical properties">
    <kinetics>
        <KM evidence="3">17.2 uM for adenylosuccinate (ADS) (at 25 degrees Celsius)</KM>
        <KM evidence="3">5.3 uM for 5-aminoimidazole-(N-succinylcarboxamide) ribonucleotide (SAICAR) (at 25 degrees Celsius)</KM>
        <text evidence="3">kcat is 0.73 sec(-1) with ADS as substrate. kcat is 1.8 sec(-1) with SAICAR as substrate.</text>
    </kinetics>
</comment>
<comment type="pathway">
    <text evidence="2 3 8 10">Purine metabolism; AMP biosynthesis via salvage pathway.</text>
</comment>
<comment type="subunit">
    <text evidence="3">Homotetramer.</text>
</comment>
<comment type="similarity">
    <text evidence="2">Belongs to the lyase 1 family. Adenylosuccinate lyase subfamily.</text>
</comment>
<comment type="caution">
    <text evidence="8 9 10">Schistosomes do not have de novo purine biosynthetic pathway, hence they depend solely on purine salvage pathway to supply for their need for purines.</text>
</comment>
<gene>
    <name evidence="11 12" type="primary">ASL</name>
    <name evidence="5 6" type="ORF">Smp_038030</name>
</gene>
<name>PUR8_SCHMA</name>
<sequence length="480" mass="54501">MDEFEEYRNPLTKRYASREMVCNFGEKRKVILWRQLWIWLAETQKELGFDITDEQINEMKSQRDSVDFGTAAAEEKARRHDVMAHVYTFALACPKAAPIIHLGATSCFVGDNADLIMLKDGLNILLPKVARCIDRLAKKAMLHKSLICLARTHLQPAQPTTMGRRICMWIQDLLLDLENLERLKNHTIRFRGAKGAVGTQASFMDLFQGDHQKVIKLDEILTKKSGFQRSWCVTGQTYPRKVDIEITNALSNIGATVHKICTDIRLLSSFHEVEEPFETKQIGSSAMPYKRNPIRSERACSLARYLMHISTSMVSTVSVQWLERSLDDSAIRRIVLPEAFLAADACLTLLQNIAEGLIVYPMVMEANLNSELPFLVVERILVKMVSEGAANRQECHERLRKHSHEAAAEIKLKGLKNSLMDKLLNDYYFAPIHSLLPTVLDPSYMIGRAVEQVEVFLNTEVDPAIHSYKDCLALNSNITI</sequence>
<reference evidence="11 12" key="1">
    <citation type="journal article" date="2002" name="Int. J. Parasitol.">
        <title>Adenylosuccinate lyase of Schistosoma mansoni: gene structure, mRNA expression, and analysis of the predicted peptide structure of a potential chemotherapeutic target.</title>
        <authorList>
            <person name="Foulk B.W."/>
            <person name="Pappas G."/>
            <person name="Hirai Y."/>
            <person name="Hirai H."/>
            <person name="Williams D.L."/>
        </authorList>
    </citation>
    <scope>NUCLEOTIDE SEQUENCE [GENOMIC DNA / MRNA]</scope>
    <scope>PATHWAY</scope>
    <source>
        <strain evidence="11 12">NMRI</strain>
    </source>
</reference>
<reference evidence="13" key="2">
    <citation type="journal article" date="2012" name="PLoS Negl. Trop. Dis.">
        <title>A systematically improved high quality genome and transcriptome of the human blood fluke Schistosoma mansoni.</title>
        <authorList>
            <person name="Protasio A.V."/>
            <person name="Tsai I.J."/>
            <person name="Babbage A."/>
            <person name="Nichol S."/>
            <person name="Hunt M."/>
            <person name="Aslett M.A."/>
            <person name="De Silva N."/>
            <person name="Velarde G.S."/>
            <person name="Anderson T.J."/>
            <person name="Clark R.C."/>
            <person name="Davidson C."/>
            <person name="Dillon G.P."/>
            <person name="Holroyd N.E."/>
            <person name="LoVerde P.T."/>
            <person name="Lloyd C."/>
            <person name="McQuillan J."/>
            <person name="Oliveira G."/>
            <person name="Otto T.D."/>
            <person name="Parker-Manuel S.J."/>
            <person name="Quail M.A."/>
            <person name="Wilson R.A."/>
            <person name="Zerlotini A."/>
            <person name="Dunne D.W."/>
            <person name="Berriman M."/>
        </authorList>
    </citation>
    <scope>NUCLEOTIDE SEQUENCE [LARGE SCALE GENOMIC DNA]</scope>
    <source>
        <strain evidence="13">Puerto Rican</strain>
    </source>
</reference>
<reference key="3">
    <citation type="journal article" date="2020" name="Front. Immunol.">
        <title>Investigating Immunization With Nucleotide Enzymes of Schistosoma mansoni: Nucleoside Diphosphate Kinase and Adenylosuccinate Lyase as New Antigenic Targets Against Schistosomiasis.</title>
        <authorList>
            <person name="Cagnazzo T.D.O."/>
            <person name="Nogueira C.T."/>
            <person name="de Castro C.A."/>
            <person name="Neris D.M."/>
            <person name="Fattori A.C.M."/>
            <person name="Correia R.O."/>
            <person name="Albuquerque Y.R."/>
            <person name="Fragelli B.D.L."/>
            <person name="Mendes T.M.F."/>
            <person name="Allegretti S.M."/>
            <person name="Soares E.G."/>
            <person name="Romanello L."/>
            <person name="Torini J.R."/>
            <person name="Pereira H.D."/>
            <person name="Anibal F.F."/>
        </authorList>
    </citation>
    <scope>PATHWAY</scope>
    <source>
        <strain evidence="6">Puerto Rican</strain>
    </source>
</reference>
<reference evidence="15 16" key="4">
    <citation type="journal article" date="2017" name="Mol. Biochem. Parasitol.">
        <title>Structural and kinetic analysis of Schistosoma mansoni Adenylosuccinate Lyase (SmADSL).</title>
        <authorList>
            <person name="Romanello L."/>
            <person name="Serrao V.H.B."/>
            <person name="Torini J.R."/>
            <person name="Bird L.E."/>
            <person name="Nettleship J.E."/>
            <person name="Rada H."/>
            <person name="Reddivari Y."/>
            <person name="Owens R.J."/>
            <person name="DeMarco R."/>
            <person name="Brandao-Neto J."/>
            <person name="Pereira H.D."/>
        </authorList>
    </citation>
    <scope>X-RAY CRYSTALLOGRAPHY (2.14 ANGSTROMS) AND IN COMPLEX WITH AMP</scope>
    <scope>FUNCTION</scope>
    <scope>CATALYTIC ACTIVITY</scope>
    <scope>BIOPHYSICOCHEMICAL PROPERTIES</scope>
    <scope>PATHWAY</scope>
    <scope>SUBUNIT</scope>
    <source>
        <strain evidence="5">Puerto Rican</strain>
    </source>
</reference>
<feature type="chain" id="PRO_0000461199" description="Adenylosuccinate lyase">
    <location>
        <begin position="1"/>
        <end position="480"/>
    </location>
</feature>
<feature type="active site" description="Proton donor/acceptor" evidence="1">
    <location>
        <position position="153"/>
    </location>
</feature>
<feature type="active site" description="Proton donor/acceptor" evidence="1">
    <location>
        <position position="284"/>
    </location>
</feature>
<feature type="binding site" evidence="3 15">
    <location>
        <position position="14"/>
    </location>
    <ligand>
        <name>AMP</name>
        <dbReference type="ChEBI" id="CHEBI:456215"/>
    </ligand>
</feature>
<feature type="binding site" evidence="3 15">
    <location>
        <position position="15"/>
    </location>
    <ligand>
        <name>AMP</name>
        <dbReference type="ChEBI" id="CHEBI:456215"/>
    </ligand>
</feature>
<feature type="binding site" evidence="3 15">
    <location>
        <position position="79"/>
    </location>
    <ligand>
        <name>AMP</name>
        <dbReference type="ChEBI" id="CHEBI:456215"/>
    </ligand>
</feature>
<feature type="binding site" evidence="3 15">
    <location>
        <position position="80"/>
    </location>
    <ligand>
        <name>AMP</name>
        <dbReference type="ChEBI" id="CHEBI:456215"/>
    </ligand>
</feature>
<feature type="binding site" evidence="1">
    <location>
        <position position="80"/>
    </location>
    <ligand>
        <name>fumarate</name>
        <dbReference type="ChEBI" id="CHEBI:29806"/>
    </ligand>
</feature>
<feature type="binding site" evidence="3 15">
    <location>
        <position position="81"/>
    </location>
    <ligand>
        <name>AMP</name>
        <dbReference type="ChEBI" id="CHEBI:456215"/>
    </ligand>
</feature>
<feature type="binding site" evidence="3 15">
    <location>
        <position position="236"/>
    </location>
    <ligand>
        <name>AMP</name>
        <dbReference type="ChEBI" id="CHEBI:456215"/>
    </ligand>
</feature>
<feature type="binding site" evidence="1">
    <location>
        <position position="236"/>
    </location>
    <ligand>
        <name>fumarate</name>
        <dbReference type="ChEBI" id="CHEBI:29806"/>
    </ligand>
</feature>
<feature type="binding site" evidence="1">
    <location>
        <position position="236"/>
    </location>
    <ligand>
        <name>N(6)-(1,2-dicarboxyethyl)-AMP</name>
        <dbReference type="ChEBI" id="CHEBI:57567"/>
    </ligand>
</feature>
<feature type="binding site" evidence="1">
    <location>
        <position position="285"/>
    </location>
    <ligand>
        <name>fumarate</name>
        <dbReference type="ChEBI" id="CHEBI:29806"/>
    </ligand>
</feature>
<feature type="binding site" evidence="1">
    <location>
        <position position="285"/>
    </location>
    <ligand>
        <name>N(6)-(1,2-dicarboxyethyl)-AMP</name>
        <dbReference type="ChEBI" id="CHEBI:57567"/>
    </ligand>
</feature>
<feature type="binding site" evidence="1">
    <location>
        <position position="290"/>
    </location>
    <ligand>
        <name>fumarate</name>
        <dbReference type="ChEBI" id="CHEBI:29806"/>
    </ligand>
</feature>
<feature type="binding site" evidence="1">
    <location>
        <position position="290"/>
    </location>
    <ligand>
        <name>N(6)-(1,2-dicarboxyethyl)-AMP</name>
        <dbReference type="ChEBI" id="CHEBI:57567"/>
    </ligand>
</feature>
<feature type="binding site" evidence="1">
    <location>
        <position position="292"/>
    </location>
    <ligand>
        <name>fumarate</name>
        <dbReference type="ChEBI" id="CHEBI:29806"/>
    </ligand>
</feature>
<feature type="binding site" evidence="1">
    <location>
        <position position="292"/>
    </location>
    <ligand>
        <name>N(6)-(1,2-dicarboxyethyl)-AMP</name>
        <dbReference type="ChEBI" id="CHEBI:57567"/>
    </ligand>
</feature>
<feature type="binding site" evidence="3 15">
    <location>
        <position position="298"/>
    </location>
    <ligand>
        <name>AMP</name>
        <dbReference type="ChEBI" id="CHEBI:456215"/>
    </ligand>
</feature>
<feature type="binding site" evidence="1">
    <location>
        <position position="324"/>
    </location>
    <ligand>
        <name>N(6)-(1,2-dicarboxyethyl)-AMP</name>
        <dbReference type="ChEBI" id="CHEBI:57567"/>
    </ligand>
</feature>
<feature type="binding site" evidence="3 15">
    <location>
        <position position="329"/>
    </location>
    <ligand>
        <name>AMP</name>
        <dbReference type="ChEBI" id="CHEBI:456215"/>
    </ligand>
</feature>
<feature type="binding site" evidence="1">
    <location>
        <position position="329"/>
    </location>
    <ligand>
        <name>N(6)-(1,2-dicarboxyethyl)-AMP</name>
        <dbReference type="ChEBI" id="CHEBI:57567"/>
    </ligand>
</feature>
<feature type="binding site" evidence="3 15">
    <location>
        <position position="333"/>
    </location>
    <ligand>
        <name>AMP</name>
        <dbReference type="ChEBI" id="CHEBI:456215"/>
    </ligand>
</feature>
<feature type="binding site" evidence="1">
    <location>
        <position position="333"/>
    </location>
    <ligand>
        <name>N(6)-(1,2-dicarboxyethyl)-AMP</name>
        <dbReference type="ChEBI" id="CHEBI:57567"/>
    </ligand>
</feature>
<feature type="sequence conflict" description="In Ref. 1; AAL47009." evidence="7" ref="1">
    <original>L</original>
    <variation>LRL</variation>
    <location>
        <position position="266"/>
    </location>
</feature>
<feature type="sequence conflict" description="In Ref. 1; AAL47135." evidence="7" ref="1">
    <original>S</original>
    <variation>T</variation>
    <location>
        <position position="269"/>
    </location>
</feature>
<feature type="sequence conflict" description="In Ref. 1; AAL47135." evidence="7" ref="1">
    <original>R</original>
    <variation>I</variation>
    <location>
        <position position="333"/>
    </location>
</feature>
<feature type="helix" evidence="18">
    <location>
        <begin position="10"/>
        <end position="13"/>
    </location>
</feature>
<feature type="helix" evidence="18">
    <location>
        <begin position="18"/>
        <end position="23"/>
    </location>
</feature>
<feature type="helix" evidence="18">
    <location>
        <begin position="26"/>
        <end position="44"/>
    </location>
</feature>
<feature type="turn" evidence="18">
    <location>
        <begin position="45"/>
        <end position="47"/>
    </location>
</feature>
<feature type="helix" evidence="18">
    <location>
        <begin position="54"/>
        <end position="61"/>
    </location>
</feature>
<feature type="helix" evidence="18">
    <location>
        <begin position="68"/>
        <end position="75"/>
    </location>
</feature>
<feature type="turn" evidence="18">
    <location>
        <begin position="76"/>
        <end position="78"/>
    </location>
</feature>
<feature type="helix" evidence="18">
    <location>
        <begin position="81"/>
        <end position="92"/>
    </location>
</feature>
<feature type="turn" evidence="18">
    <location>
        <begin position="94"/>
        <end position="96"/>
    </location>
</feature>
<feature type="helix" evidence="18">
    <location>
        <begin position="97"/>
        <end position="99"/>
    </location>
</feature>
<feature type="turn" evidence="17">
    <location>
        <begin position="100"/>
        <end position="103"/>
    </location>
</feature>
<feature type="helix" evidence="18">
    <location>
        <begin position="106"/>
        <end position="142"/>
    </location>
</feature>
<feature type="strand" evidence="18">
    <location>
        <begin position="147"/>
        <end position="152"/>
    </location>
</feature>
<feature type="strand" evidence="18">
    <location>
        <begin position="155"/>
        <end position="161"/>
    </location>
</feature>
<feature type="helix" evidence="18">
    <location>
        <begin position="162"/>
        <end position="185"/>
    </location>
</feature>
<feature type="strand" evidence="18">
    <location>
        <begin position="196"/>
        <end position="199"/>
    </location>
</feature>
<feature type="helix" evidence="18">
    <location>
        <begin position="201"/>
        <end position="206"/>
    </location>
</feature>
<feature type="turn" evidence="18">
    <location>
        <begin position="207"/>
        <end position="209"/>
    </location>
</feature>
<feature type="helix" evidence="18">
    <location>
        <begin position="211"/>
        <end position="224"/>
    </location>
</feature>
<feature type="strand" evidence="18">
    <location>
        <begin position="235"/>
        <end position="238"/>
    </location>
</feature>
<feature type="helix" evidence="18">
    <location>
        <begin position="241"/>
        <end position="269"/>
    </location>
</feature>
<feature type="strand" evidence="18">
    <location>
        <begin position="272"/>
        <end position="274"/>
    </location>
</feature>
<feature type="helix" evidence="18">
    <location>
        <begin position="294"/>
        <end position="308"/>
    </location>
</feature>
<feature type="helix" evidence="18">
    <location>
        <begin position="311"/>
        <end position="318"/>
    </location>
</feature>
<feature type="helix" evidence="18">
    <location>
        <begin position="326"/>
        <end position="328"/>
    </location>
</feature>
<feature type="helix" evidence="18">
    <location>
        <begin position="329"/>
        <end position="356"/>
    </location>
</feature>
<feature type="helix" evidence="18">
    <location>
        <begin position="361"/>
        <end position="375"/>
    </location>
</feature>
<feature type="helix" evidence="18">
    <location>
        <begin position="377"/>
        <end position="386"/>
    </location>
</feature>
<feature type="helix" evidence="18">
    <location>
        <begin position="392"/>
        <end position="413"/>
    </location>
</feature>
<feature type="helix" evidence="18">
    <location>
        <begin position="418"/>
        <end position="425"/>
    </location>
</feature>
<feature type="helix" evidence="18">
    <location>
        <begin position="427"/>
        <end position="432"/>
    </location>
</feature>
<feature type="turn" evidence="18">
    <location>
        <begin position="433"/>
        <end position="435"/>
    </location>
</feature>
<feature type="helix" evidence="18">
    <location>
        <begin position="436"/>
        <end position="439"/>
    </location>
</feature>
<feature type="helix" evidence="18">
    <location>
        <begin position="442"/>
        <end position="445"/>
    </location>
</feature>
<feature type="turn" evidence="18">
    <location>
        <begin position="446"/>
        <end position="448"/>
    </location>
</feature>
<feature type="helix" evidence="18">
    <location>
        <begin position="449"/>
        <end position="459"/>
    </location>
</feature>
<feature type="helix" evidence="18">
    <location>
        <begin position="461"/>
        <end position="464"/>
    </location>
</feature>
<feature type="helix" evidence="18">
    <location>
        <begin position="466"/>
        <end position="471"/>
    </location>
</feature>
<keyword id="KW-0002">3D-structure</keyword>
<keyword id="KW-0456">Lyase</keyword>
<keyword id="KW-0545">Nucleotide biosynthesis</keyword>
<keyword id="KW-0547">Nucleotide-binding</keyword>
<keyword id="KW-0660">Purine salvage</keyword>
<keyword id="KW-1185">Reference proteome</keyword>
<dbReference type="EC" id="4.3.2.2" evidence="2 3"/>
<dbReference type="EMBL" id="AF448822">
    <property type="protein sequence ID" value="AAL47135.1"/>
    <property type="molecule type" value="mRNA"/>
</dbReference>
<dbReference type="EMBL" id="AH011254">
    <property type="protein sequence ID" value="AAL47009.1"/>
    <property type="molecule type" value="Genomic_DNA"/>
</dbReference>
<dbReference type="EMBL" id="AF448820">
    <property type="protein sequence ID" value="AAL47009.1"/>
    <property type="status" value="JOINED"/>
    <property type="molecule type" value="Genomic_DNA"/>
</dbReference>
<dbReference type="EMBL" id="HE601631">
    <property type="protein sequence ID" value="CCD82620.1"/>
    <property type="molecule type" value="Genomic_DNA"/>
</dbReference>
<dbReference type="RefSeq" id="XP_018655203.1">
    <property type="nucleotide sequence ID" value="XM_018789796.1"/>
</dbReference>
<dbReference type="PDB" id="5EYT">
    <property type="method" value="X-ray"/>
    <property type="resolution" value="2.36 A"/>
    <property type="chains" value="A=1-480"/>
</dbReference>
<dbReference type="PDB" id="5EYV">
    <property type="method" value="X-ray"/>
    <property type="resolution" value="2.14 A"/>
    <property type="chains" value="A/B=1-480"/>
</dbReference>
<dbReference type="PDBsum" id="5EYT"/>
<dbReference type="PDBsum" id="5EYV"/>
<dbReference type="SMR" id="G4VQX9"/>
<dbReference type="FunCoup" id="G4VQX9">
    <property type="interactions" value="1636"/>
</dbReference>
<dbReference type="STRING" id="6183.G4VQX9"/>
<dbReference type="EnsemblMetazoa" id="Smp_038030.1">
    <property type="protein sequence ID" value="Smp_038030.1"/>
    <property type="gene ID" value="Smp_038030"/>
</dbReference>
<dbReference type="GeneID" id="8351958"/>
<dbReference type="KEGG" id="smm:Smp_038030"/>
<dbReference type="WBParaSite" id="Smp_038030.1">
    <property type="protein sequence ID" value="Smp_038030.1"/>
    <property type="gene ID" value="Smp_038030"/>
</dbReference>
<dbReference type="CTD" id="8351958"/>
<dbReference type="eggNOG" id="KOG2700">
    <property type="taxonomic scope" value="Eukaryota"/>
</dbReference>
<dbReference type="HOGENOM" id="CLU_030949_1_1_1"/>
<dbReference type="InParanoid" id="G4VQX9"/>
<dbReference type="OMA" id="VQENAMK"/>
<dbReference type="OrthoDB" id="406045at2759"/>
<dbReference type="PhylomeDB" id="G4VQX9"/>
<dbReference type="UniPathway" id="UPA00588"/>
<dbReference type="Proteomes" id="UP000008854">
    <property type="component" value="Unassembled WGS sequence"/>
</dbReference>
<dbReference type="ExpressionAtlas" id="G4VQX9">
    <property type="expression patterns" value="baseline"/>
</dbReference>
<dbReference type="GO" id="GO:0005829">
    <property type="term" value="C:cytosol"/>
    <property type="evidence" value="ECO:0007669"/>
    <property type="project" value="TreeGrafter"/>
</dbReference>
<dbReference type="GO" id="GO:0070626">
    <property type="term" value="F:(S)-2-(5-amino-1-(5-phospho-D-ribosyl)imidazole-4-carboxamido) succinate lyase (fumarate-forming) activity"/>
    <property type="evidence" value="ECO:0007669"/>
    <property type="project" value="TreeGrafter"/>
</dbReference>
<dbReference type="GO" id="GO:0004018">
    <property type="term" value="F:N6-(1,2-dicarboxyethyl)AMP AMP-lyase (fumarate-forming) activity"/>
    <property type="evidence" value="ECO:0007669"/>
    <property type="project" value="InterPro"/>
</dbReference>
<dbReference type="GO" id="GO:0000166">
    <property type="term" value="F:nucleotide binding"/>
    <property type="evidence" value="ECO:0007669"/>
    <property type="project" value="UniProtKB-KW"/>
</dbReference>
<dbReference type="GO" id="GO:0044208">
    <property type="term" value="P:'de novo' AMP biosynthetic process"/>
    <property type="evidence" value="ECO:0007669"/>
    <property type="project" value="UniProtKB-UniPathway"/>
</dbReference>
<dbReference type="GO" id="GO:0006189">
    <property type="term" value="P:'de novo' IMP biosynthetic process"/>
    <property type="evidence" value="ECO:0007669"/>
    <property type="project" value="UniProtKB-UniPathway"/>
</dbReference>
<dbReference type="GO" id="GO:0006167">
    <property type="term" value="P:AMP biosynthetic process"/>
    <property type="evidence" value="ECO:0000314"/>
    <property type="project" value="UniProtKB"/>
</dbReference>
<dbReference type="GO" id="GO:0044209">
    <property type="term" value="P:AMP salvage"/>
    <property type="evidence" value="ECO:0000314"/>
    <property type="project" value="UniProtKB"/>
</dbReference>
<dbReference type="GO" id="GO:0032261">
    <property type="term" value="P:purine nucleotide salvage"/>
    <property type="evidence" value="ECO:0000314"/>
    <property type="project" value="UniProtKB"/>
</dbReference>
<dbReference type="GO" id="GO:0006166">
    <property type="term" value="P:purine ribonucleoside salvage"/>
    <property type="evidence" value="ECO:0007669"/>
    <property type="project" value="UniProtKB-KW"/>
</dbReference>
<dbReference type="CDD" id="cd03302">
    <property type="entry name" value="Adenylsuccinate_lyase_2"/>
    <property type="match status" value="1"/>
</dbReference>
<dbReference type="Gene3D" id="6.10.250.1570">
    <property type="match status" value="1"/>
</dbReference>
<dbReference type="Gene3D" id="1.20.200.10">
    <property type="entry name" value="Fumarase/aspartase (Central domain)"/>
    <property type="match status" value="1"/>
</dbReference>
<dbReference type="Gene3D" id="1.10.275.10">
    <property type="entry name" value="Fumarase/aspartase (N-terminal domain)"/>
    <property type="match status" value="1"/>
</dbReference>
<dbReference type="InterPro" id="IPR019468">
    <property type="entry name" value="AdenyloSucc_lyase_C"/>
</dbReference>
<dbReference type="InterPro" id="IPR024083">
    <property type="entry name" value="Fumarase/histidase_N"/>
</dbReference>
<dbReference type="InterPro" id="IPR020557">
    <property type="entry name" value="Fumarate_lyase_CS"/>
</dbReference>
<dbReference type="InterPro" id="IPR000362">
    <property type="entry name" value="Fumarate_lyase_fam"/>
</dbReference>
<dbReference type="InterPro" id="IPR022761">
    <property type="entry name" value="Fumarate_lyase_N"/>
</dbReference>
<dbReference type="InterPro" id="IPR008948">
    <property type="entry name" value="L-Aspartase-like"/>
</dbReference>
<dbReference type="InterPro" id="IPR004769">
    <property type="entry name" value="Pur_lyase"/>
</dbReference>
<dbReference type="NCBIfam" id="TIGR00928">
    <property type="entry name" value="purB"/>
    <property type="match status" value="1"/>
</dbReference>
<dbReference type="PANTHER" id="PTHR43172">
    <property type="entry name" value="ADENYLOSUCCINATE LYASE"/>
    <property type="match status" value="1"/>
</dbReference>
<dbReference type="PANTHER" id="PTHR43172:SF1">
    <property type="entry name" value="ADENYLOSUCCINATE LYASE"/>
    <property type="match status" value="1"/>
</dbReference>
<dbReference type="Pfam" id="PF10397">
    <property type="entry name" value="ADSL_C"/>
    <property type="match status" value="1"/>
</dbReference>
<dbReference type="Pfam" id="PF00206">
    <property type="entry name" value="Lyase_1"/>
    <property type="match status" value="1"/>
</dbReference>
<dbReference type="PRINTS" id="PR00149">
    <property type="entry name" value="FUMRATELYASE"/>
</dbReference>
<dbReference type="SMART" id="SM00998">
    <property type="entry name" value="ADSL_C"/>
    <property type="match status" value="1"/>
</dbReference>
<dbReference type="SUPFAM" id="SSF48557">
    <property type="entry name" value="L-aspartase-like"/>
    <property type="match status" value="1"/>
</dbReference>
<dbReference type="PROSITE" id="PS00163">
    <property type="entry name" value="FUMARATE_LYASES"/>
    <property type="match status" value="1"/>
</dbReference>
<accession>G4VQX9</accession>
<accession>Q8WRD5</accession>
<accession>Q8WRD6</accession>
<evidence type="ECO:0000250" key="1">
    <source>
        <dbReference type="UniProtKB" id="P0AB89"/>
    </source>
</evidence>
<evidence type="ECO:0000255" key="2">
    <source>
        <dbReference type="RuleBase" id="RU361172"/>
    </source>
</evidence>
<evidence type="ECO:0000269" key="3">
    <source>
    </source>
</evidence>
<evidence type="ECO:0000303" key="4">
    <source>
    </source>
</evidence>
<evidence type="ECO:0000303" key="5">
    <source>
    </source>
</evidence>
<evidence type="ECO:0000303" key="6">
    <source>
    </source>
</evidence>
<evidence type="ECO:0000305" key="7"/>
<evidence type="ECO:0000305" key="8">
    <source>
    </source>
</evidence>
<evidence type="ECO:0000305" key="9">
    <source>
    </source>
</evidence>
<evidence type="ECO:0000305" key="10">
    <source>
    </source>
</evidence>
<evidence type="ECO:0000312" key="11">
    <source>
        <dbReference type="EMBL" id="AAL47009.1"/>
    </source>
</evidence>
<evidence type="ECO:0000312" key="12">
    <source>
        <dbReference type="EMBL" id="AAL47135.1"/>
    </source>
</evidence>
<evidence type="ECO:0000312" key="13">
    <source>
        <dbReference type="Proteomes" id="UP000008854"/>
    </source>
</evidence>
<evidence type="ECO:0000312" key="14">
    <source>
        <dbReference type="WBParaSite" id="Smp_038030.1"/>
    </source>
</evidence>
<evidence type="ECO:0007744" key="15">
    <source>
        <dbReference type="PDB" id="5EYT"/>
    </source>
</evidence>
<evidence type="ECO:0007744" key="16">
    <source>
        <dbReference type="PDB" id="5EYV"/>
    </source>
</evidence>
<evidence type="ECO:0007829" key="17">
    <source>
        <dbReference type="PDB" id="5EYT"/>
    </source>
</evidence>
<evidence type="ECO:0007829" key="18">
    <source>
        <dbReference type="PDB" id="5EYV"/>
    </source>
</evidence>